<dbReference type="EC" id="6.3.5.7" evidence="1"/>
<dbReference type="EMBL" id="CP000077">
    <property type="protein sequence ID" value="AAY80665.1"/>
    <property type="molecule type" value="Genomic_DNA"/>
</dbReference>
<dbReference type="RefSeq" id="WP_011278167.1">
    <property type="nucleotide sequence ID" value="NC_007181.1"/>
</dbReference>
<dbReference type="SMR" id="Q4J965"/>
<dbReference type="STRING" id="330779.Saci_1330"/>
<dbReference type="GeneID" id="14551833"/>
<dbReference type="GeneID" id="78441676"/>
<dbReference type="KEGG" id="sai:Saci_1330"/>
<dbReference type="PATRIC" id="fig|330779.12.peg.1283"/>
<dbReference type="eggNOG" id="arCOG01717">
    <property type="taxonomic scope" value="Archaea"/>
</dbReference>
<dbReference type="HOGENOM" id="CLU_009600_0_3_2"/>
<dbReference type="Proteomes" id="UP000001018">
    <property type="component" value="Chromosome"/>
</dbReference>
<dbReference type="GO" id="GO:0030956">
    <property type="term" value="C:glutamyl-tRNA(Gln) amidotransferase complex"/>
    <property type="evidence" value="ECO:0007669"/>
    <property type="project" value="InterPro"/>
</dbReference>
<dbReference type="GO" id="GO:0005524">
    <property type="term" value="F:ATP binding"/>
    <property type="evidence" value="ECO:0007669"/>
    <property type="project" value="UniProtKB-KW"/>
</dbReference>
<dbReference type="GO" id="GO:0050567">
    <property type="term" value="F:glutaminyl-tRNA synthase (glutamine-hydrolyzing) activity"/>
    <property type="evidence" value="ECO:0007669"/>
    <property type="project" value="UniProtKB-UniRule"/>
</dbReference>
<dbReference type="GO" id="GO:0006412">
    <property type="term" value="P:translation"/>
    <property type="evidence" value="ECO:0007669"/>
    <property type="project" value="UniProtKB-UniRule"/>
</dbReference>
<dbReference type="Gene3D" id="3.90.1300.10">
    <property type="entry name" value="Amidase signature (AS) domain"/>
    <property type="match status" value="1"/>
</dbReference>
<dbReference type="HAMAP" id="MF_00120">
    <property type="entry name" value="GatA"/>
    <property type="match status" value="1"/>
</dbReference>
<dbReference type="InterPro" id="IPR000120">
    <property type="entry name" value="Amidase"/>
</dbReference>
<dbReference type="InterPro" id="IPR020556">
    <property type="entry name" value="Amidase_CS"/>
</dbReference>
<dbReference type="InterPro" id="IPR023631">
    <property type="entry name" value="Amidase_dom"/>
</dbReference>
<dbReference type="InterPro" id="IPR036928">
    <property type="entry name" value="AS_sf"/>
</dbReference>
<dbReference type="InterPro" id="IPR004412">
    <property type="entry name" value="GatA"/>
</dbReference>
<dbReference type="NCBIfam" id="TIGR00132">
    <property type="entry name" value="gatA"/>
    <property type="match status" value="1"/>
</dbReference>
<dbReference type="PANTHER" id="PTHR11895:SF7">
    <property type="entry name" value="GLUTAMYL-TRNA(GLN) AMIDOTRANSFERASE SUBUNIT A, MITOCHONDRIAL"/>
    <property type="match status" value="1"/>
</dbReference>
<dbReference type="PANTHER" id="PTHR11895">
    <property type="entry name" value="TRANSAMIDASE"/>
    <property type="match status" value="1"/>
</dbReference>
<dbReference type="Pfam" id="PF01425">
    <property type="entry name" value="Amidase"/>
    <property type="match status" value="1"/>
</dbReference>
<dbReference type="SUPFAM" id="SSF75304">
    <property type="entry name" value="Amidase signature (AS) enzymes"/>
    <property type="match status" value="1"/>
</dbReference>
<dbReference type="PROSITE" id="PS00571">
    <property type="entry name" value="AMIDASES"/>
    <property type="match status" value="1"/>
</dbReference>
<keyword id="KW-0067">ATP-binding</keyword>
<keyword id="KW-0436">Ligase</keyword>
<keyword id="KW-0547">Nucleotide-binding</keyword>
<keyword id="KW-0648">Protein biosynthesis</keyword>
<keyword id="KW-1185">Reference proteome</keyword>
<accession>Q4J965</accession>
<sequence>MIEDVVESLKNGNLTPEDYVEKTYEKIERVEKLIHSFITIRNKQEIIDEVKKNISNKHGKLAGVLIAIKDNISTLGIRTTCASRILEDYIPPYDATVVEKLKSEGAVIIGKTNMDEFAMGSTTETSYFGPTKNPWDLERTPGGSSGGSGAVLAGGIVELALGSDTGGSIRAPAAFNGVFGLKPSYGTVSRYGLIAYANSLEQIGPMAKNAEDLELLYDVIAGEDWRDATTISINKNEYKRDGSSKVDLKNIKIAVLKDILEASEKPVTSAFNEILDKLVSEGVSIDYIEFKLAEYALPAYYIIAMSEASSNLARFDGVRYGYSAHYDGIWKDTYGKNRGEGFGIEVKRRIMLGSFILSAGYYEQYYIKALKVRRLIKDEIDRILKQYDFIASPTMPIIPPKLGEVVGDPLKMYAMDLNTVIANLAGVPALSQPIGFYNNLPIGLQLMGSYLSDYKLINISKNIEKISKYYNLTANI</sequence>
<feature type="chain" id="PRO_0000105236" description="Glutamyl-tRNA(Gln) amidotransferase subunit A">
    <location>
        <begin position="1"/>
        <end position="476"/>
    </location>
</feature>
<feature type="active site" description="Charge relay system" evidence="1">
    <location>
        <position position="69"/>
    </location>
</feature>
<feature type="active site" description="Charge relay system" evidence="1">
    <location>
        <position position="144"/>
    </location>
</feature>
<feature type="active site" description="Acyl-ester intermediate" evidence="1">
    <location>
        <position position="168"/>
    </location>
</feature>
<proteinExistence type="inferred from homology"/>
<reference key="1">
    <citation type="journal article" date="2005" name="J. Bacteriol.">
        <title>The genome of Sulfolobus acidocaldarius, a model organism of the Crenarchaeota.</title>
        <authorList>
            <person name="Chen L."/>
            <person name="Bruegger K."/>
            <person name="Skovgaard M."/>
            <person name="Redder P."/>
            <person name="She Q."/>
            <person name="Torarinsson E."/>
            <person name="Greve B."/>
            <person name="Awayez M."/>
            <person name="Zibat A."/>
            <person name="Klenk H.-P."/>
            <person name="Garrett R.A."/>
        </authorList>
    </citation>
    <scope>NUCLEOTIDE SEQUENCE [LARGE SCALE GENOMIC DNA]</scope>
    <source>
        <strain>ATCC 33909 / DSM 639 / JCM 8929 / NBRC 15157 / NCIMB 11770</strain>
    </source>
</reference>
<gene>
    <name evidence="1" type="primary">gatA</name>
    <name type="ordered locus">Saci_1330</name>
</gene>
<evidence type="ECO:0000255" key="1">
    <source>
        <dbReference type="HAMAP-Rule" id="MF_00120"/>
    </source>
</evidence>
<comment type="function">
    <text evidence="1">Allows the formation of correctly charged Gln-tRNA(Gln) through the transamidation of misacylated Glu-tRNA(Gln) in organisms which lack glutaminyl-tRNA synthetase. The reaction takes place in the presence of glutamine and ATP through an activated gamma-phospho-Glu-tRNA(Gln).</text>
</comment>
<comment type="catalytic activity">
    <reaction evidence="1">
        <text>L-glutamyl-tRNA(Gln) + L-glutamine + ATP + H2O = L-glutaminyl-tRNA(Gln) + L-glutamate + ADP + phosphate + H(+)</text>
        <dbReference type="Rhea" id="RHEA:17521"/>
        <dbReference type="Rhea" id="RHEA-COMP:9681"/>
        <dbReference type="Rhea" id="RHEA-COMP:9684"/>
        <dbReference type="ChEBI" id="CHEBI:15377"/>
        <dbReference type="ChEBI" id="CHEBI:15378"/>
        <dbReference type="ChEBI" id="CHEBI:29985"/>
        <dbReference type="ChEBI" id="CHEBI:30616"/>
        <dbReference type="ChEBI" id="CHEBI:43474"/>
        <dbReference type="ChEBI" id="CHEBI:58359"/>
        <dbReference type="ChEBI" id="CHEBI:78520"/>
        <dbReference type="ChEBI" id="CHEBI:78521"/>
        <dbReference type="ChEBI" id="CHEBI:456216"/>
        <dbReference type="EC" id="6.3.5.7"/>
    </reaction>
</comment>
<comment type="subunit">
    <text evidence="1">Heterotrimer of A, B and C subunits.</text>
</comment>
<comment type="similarity">
    <text evidence="1">Belongs to the amidase family. GatA subfamily.</text>
</comment>
<name>GATA_SULAC</name>
<organism>
    <name type="scientific">Sulfolobus acidocaldarius (strain ATCC 33909 / DSM 639 / JCM 8929 / NBRC 15157 / NCIMB 11770)</name>
    <dbReference type="NCBI Taxonomy" id="330779"/>
    <lineage>
        <taxon>Archaea</taxon>
        <taxon>Thermoproteota</taxon>
        <taxon>Thermoprotei</taxon>
        <taxon>Sulfolobales</taxon>
        <taxon>Sulfolobaceae</taxon>
        <taxon>Sulfolobus</taxon>
    </lineage>
</organism>
<protein>
    <recommendedName>
        <fullName evidence="1">Glutamyl-tRNA(Gln) amidotransferase subunit A</fullName>
        <shortName evidence="1">Glu-ADT subunit A</shortName>
        <ecNumber evidence="1">6.3.5.7</ecNumber>
    </recommendedName>
</protein>